<gene>
    <name evidence="1" type="primary">psiE</name>
    <name type="ordered locus">LMHCC_1793</name>
</gene>
<proteinExistence type="inferred from homology"/>
<protein>
    <recommendedName>
        <fullName evidence="1">Protein PsiE homolog</fullName>
    </recommendedName>
</protein>
<feature type="chain" id="PRO_1000149616" description="Protein PsiE homolog">
    <location>
        <begin position="1"/>
        <end position="137"/>
    </location>
</feature>
<feature type="transmembrane region" description="Helical" evidence="1">
    <location>
        <begin position="13"/>
        <end position="33"/>
    </location>
</feature>
<feature type="transmembrane region" description="Helical" evidence="1">
    <location>
        <begin position="55"/>
        <end position="75"/>
    </location>
</feature>
<feature type="transmembrane region" description="Helical" evidence="1">
    <location>
        <begin position="82"/>
        <end position="102"/>
    </location>
</feature>
<feature type="transmembrane region" description="Helical" evidence="1">
    <location>
        <begin position="108"/>
        <end position="128"/>
    </location>
</feature>
<keyword id="KW-1003">Cell membrane</keyword>
<keyword id="KW-0472">Membrane</keyword>
<keyword id="KW-0812">Transmembrane</keyword>
<keyword id="KW-1133">Transmembrane helix</keyword>
<dbReference type="EMBL" id="CP001175">
    <property type="protein sequence ID" value="ACK40134.1"/>
    <property type="molecule type" value="Genomic_DNA"/>
</dbReference>
<dbReference type="RefSeq" id="WP_003729465.1">
    <property type="nucleotide sequence ID" value="NC_011660.1"/>
</dbReference>
<dbReference type="SMR" id="B8DGC6"/>
<dbReference type="GeneID" id="93234270"/>
<dbReference type="KEGG" id="lmh:LMHCC_1793"/>
<dbReference type="HOGENOM" id="CLU_127561_0_0_9"/>
<dbReference type="GO" id="GO:0005886">
    <property type="term" value="C:plasma membrane"/>
    <property type="evidence" value="ECO:0007669"/>
    <property type="project" value="UniProtKB-SubCell"/>
</dbReference>
<dbReference type="GO" id="GO:0016036">
    <property type="term" value="P:cellular response to phosphate starvation"/>
    <property type="evidence" value="ECO:0007669"/>
    <property type="project" value="InterPro"/>
</dbReference>
<dbReference type="HAMAP" id="MF_01048">
    <property type="entry name" value="PsiE"/>
    <property type="match status" value="1"/>
</dbReference>
<dbReference type="InterPro" id="IPR009315">
    <property type="entry name" value="P_starv_induced_PsiE"/>
</dbReference>
<dbReference type="InterPro" id="IPR020948">
    <property type="entry name" value="P_starv_induced_PsiE-like"/>
</dbReference>
<dbReference type="NCBIfam" id="NF002765">
    <property type="entry name" value="PRK02833.1-3"/>
    <property type="match status" value="1"/>
</dbReference>
<dbReference type="NCBIfam" id="NF002766">
    <property type="entry name" value="PRK02833.1-4"/>
    <property type="match status" value="1"/>
</dbReference>
<dbReference type="PANTHER" id="PTHR37819">
    <property type="entry name" value="PROTEIN PSIE"/>
    <property type="match status" value="1"/>
</dbReference>
<dbReference type="PANTHER" id="PTHR37819:SF1">
    <property type="entry name" value="PROTEIN PSIE"/>
    <property type="match status" value="1"/>
</dbReference>
<dbReference type="Pfam" id="PF06146">
    <property type="entry name" value="PsiE"/>
    <property type="match status" value="1"/>
</dbReference>
<dbReference type="PIRSF" id="PIRSF029598">
    <property type="entry name" value="PsiE"/>
    <property type="match status" value="1"/>
</dbReference>
<organism>
    <name type="scientific">Listeria monocytogenes serotype 4a (strain HCC23)</name>
    <dbReference type="NCBI Taxonomy" id="552536"/>
    <lineage>
        <taxon>Bacteria</taxon>
        <taxon>Bacillati</taxon>
        <taxon>Bacillota</taxon>
        <taxon>Bacilli</taxon>
        <taxon>Bacillales</taxon>
        <taxon>Listeriaceae</taxon>
        <taxon>Listeria</taxon>
    </lineage>
</organism>
<sequence length="137" mass="15876">MKRLEKISSIVPILLRITLNLALIMVGFTLVAFLIREAFTIFNNIFFLDTDVSYYYMTQDILTFFLYFEFIALIVKYFESHFHFPLRYFIYIGITAIIRFIIVDHSSATSTLILSGAILLLVAALFLANTKLLKREG</sequence>
<comment type="subcellular location">
    <subcellularLocation>
        <location evidence="1">Cell membrane</location>
        <topology evidence="1">Multi-pass membrane protein</topology>
    </subcellularLocation>
</comment>
<comment type="similarity">
    <text evidence="1">Belongs to the PsiE family.</text>
</comment>
<accession>B8DGC6</accession>
<evidence type="ECO:0000255" key="1">
    <source>
        <dbReference type="HAMAP-Rule" id="MF_01048"/>
    </source>
</evidence>
<reference key="1">
    <citation type="journal article" date="2011" name="J. Bacteriol.">
        <title>Genome sequence of lineage III Listeria monocytogenes strain HCC23.</title>
        <authorList>
            <person name="Steele C.L."/>
            <person name="Donaldson J.R."/>
            <person name="Paul D."/>
            <person name="Banes M.M."/>
            <person name="Arick T."/>
            <person name="Bridges S.M."/>
            <person name="Lawrence M.L."/>
        </authorList>
    </citation>
    <scope>NUCLEOTIDE SEQUENCE [LARGE SCALE GENOMIC DNA]</scope>
    <source>
        <strain>HCC23</strain>
    </source>
</reference>
<name>PSIE_LISMH</name>